<gene>
    <name type="ordered locus">HQ_3622A</name>
</gene>
<protein>
    <recommendedName>
        <fullName>Putative metal transport protein HQ_3622A</fullName>
    </recommendedName>
</protein>
<comment type="function">
    <text>May be involved in metal transport.</text>
</comment>
<comment type="subcellular location">
    <subcellularLocation>
        <location evidence="2">Cell membrane</location>
        <topology evidence="2">Single-pass membrane protein</topology>
    </subcellularLocation>
</comment>
<keyword id="KW-1003">Cell membrane</keyword>
<keyword id="KW-0472">Membrane</keyword>
<keyword id="KW-1185">Reference proteome</keyword>
<keyword id="KW-0732">Signal</keyword>
<keyword id="KW-0812">Transmembrane</keyword>
<keyword id="KW-1133">Transmembrane helix</keyword>
<keyword id="KW-0813">Transport</keyword>
<name>Y3622_HALWD</name>
<feature type="signal peptide" evidence="1">
    <location>
        <begin position="1"/>
        <end position="32"/>
    </location>
</feature>
<feature type="chain" id="PRO_0000412171" description="Putative metal transport protein HQ_3622A">
    <location>
        <begin position="33"/>
        <end position="101"/>
    </location>
</feature>
<feature type="transmembrane region" description="Helical" evidence="1">
    <location>
        <begin position="75"/>
        <end position="95"/>
    </location>
</feature>
<sequence length="101" mass="10389">MKIISMSMDSWIQRAALMLLGLVIVAPFFGWTASIVGYAEPLENAAKMTGATDAAMNLNPGVLPDYTVGGFSGPIGTLISAGVGTVLTLIVAFGAGRLLES</sequence>
<evidence type="ECO:0000255" key="1"/>
<evidence type="ECO:0000305" key="2"/>
<reference key="1">
    <citation type="journal article" date="2006" name="BMC Genomics">
        <title>The genome of the square archaeon Haloquadratum walsbyi: life at the limits of water activity.</title>
        <authorList>
            <person name="Bolhuis H."/>
            <person name="Palm P."/>
            <person name="Wende A."/>
            <person name="Falb M."/>
            <person name="Rampp M."/>
            <person name="Rodriguez-Valera F."/>
            <person name="Pfeiffer F."/>
            <person name="Oesterhelt D."/>
        </authorList>
    </citation>
    <scope>NUCLEOTIDE SEQUENCE [LARGE SCALE GENOMIC DNA]</scope>
    <source>
        <strain>DSM 16790 / HBSQ001</strain>
    </source>
</reference>
<accession>Q18EC3</accession>
<dbReference type="EMBL" id="AM180088">
    <property type="protein sequence ID" value="CAJ53710.1"/>
    <property type="molecule type" value="Genomic_DNA"/>
</dbReference>
<dbReference type="RefSeq" id="WP_011572792.1">
    <property type="nucleotide sequence ID" value="NC_008212.1"/>
</dbReference>
<dbReference type="STRING" id="362976.HQ_3622A"/>
<dbReference type="GeneID" id="4193802"/>
<dbReference type="KEGG" id="hwa:HQ_3622A"/>
<dbReference type="eggNOG" id="arCOG03159">
    <property type="taxonomic scope" value="Archaea"/>
</dbReference>
<dbReference type="HOGENOM" id="CLU_179751_0_0_2"/>
<dbReference type="Proteomes" id="UP000001975">
    <property type="component" value="Chromosome"/>
</dbReference>
<dbReference type="GO" id="GO:0005886">
    <property type="term" value="C:plasma membrane"/>
    <property type="evidence" value="ECO:0007669"/>
    <property type="project" value="UniProtKB-SubCell"/>
</dbReference>
<dbReference type="InterPro" id="IPR025937">
    <property type="entry name" value="PDGLE_dom"/>
</dbReference>
<dbReference type="Pfam" id="PF13190">
    <property type="entry name" value="PDGLE"/>
    <property type="match status" value="1"/>
</dbReference>
<proteinExistence type="inferred from homology"/>
<organism>
    <name type="scientific">Haloquadratum walsbyi (strain DSM 16790 / HBSQ001)</name>
    <dbReference type="NCBI Taxonomy" id="362976"/>
    <lineage>
        <taxon>Archaea</taxon>
        <taxon>Methanobacteriati</taxon>
        <taxon>Methanobacteriota</taxon>
        <taxon>Stenosarchaea group</taxon>
        <taxon>Halobacteria</taxon>
        <taxon>Halobacteriales</taxon>
        <taxon>Haloferacaceae</taxon>
        <taxon>Haloquadratum</taxon>
    </lineage>
</organism>